<gene>
    <name evidence="1" type="primary">rpsI</name>
    <name type="ordered locus">PAM_139</name>
</gene>
<keyword id="KW-0687">Ribonucleoprotein</keyword>
<keyword id="KW-0689">Ribosomal protein</keyword>
<sequence length="130" mass="14439">MKKVNYFGTGRRKSAVARVILTNGTGKITINTRDFEKYLPLPATRLEMIQPLELTEKREAFDVSVNVNGGGLSAQAGAIRLGIARALIESVPELRAILKKAGLLTRDARCVERKKYGLKKARRAPQFSKR</sequence>
<dbReference type="EMBL" id="AP006628">
    <property type="protein sequence ID" value="BAD04224.1"/>
    <property type="molecule type" value="Genomic_DNA"/>
</dbReference>
<dbReference type="SMR" id="Q6YR77"/>
<dbReference type="STRING" id="262768.PAM_139"/>
<dbReference type="KEGG" id="poy:PAM_139"/>
<dbReference type="eggNOG" id="COG0103">
    <property type="taxonomic scope" value="Bacteria"/>
</dbReference>
<dbReference type="HOGENOM" id="CLU_046483_2_1_14"/>
<dbReference type="BioCyc" id="OYEL262768:G1G26-171-MONOMER"/>
<dbReference type="Proteomes" id="UP000002523">
    <property type="component" value="Chromosome"/>
</dbReference>
<dbReference type="GO" id="GO:0022627">
    <property type="term" value="C:cytosolic small ribosomal subunit"/>
    <property type="evidence" value="ECO:0007669"/>
    <property type="project" value="TreeGrafter"/>
</dbReference>
<dbReference type="GO" id="GO:0003723">
    <property type="term" value="F:RNA binding"/>
    <property type="evidence" value="ECO:0007669"/>
    <property type="project" value="TreeGrafter"/>
</dbReference>
<dbReference type="GO" id="GO:0003735">
    <property type="term" value="F:structural constituent of ribosome"/>
    <property type="evidence" value="ECO:0007669"/>
    <property type="project" value="InterPro"/>
</dbReference>
<dbReference type="GO" id="GO:0006412">
    <property type="term" value="P:translation"/>
    <property type="evidence" value="ECO:0007669"/>
    <property type="project" value="UniProtKB-UniRule"/>
</dbReference>
<dbReference type="FunFam" id="3.30.230.10:FF:000001">
    <property type="entry name" value="30S ribosomal protein S9"/>
    <property type="match status" value="1"/>
</dbReference>
<dbReference type="Gene3D" id="3.30.230.10">
    <property type="match status" value="1"/>
</dbReference>
<dbReference type="HAMAP" id="MF_00532_B">
    <property type="entry name" value="Ribosomal_uS9_B"/>
    <property type="match status" value="1"/>
</dbReference>
<dbReference type="InterPro" id="IPR020568">
    <property type="entry name" value="Ribosomal_Su5_D2-typ_SF"/>
</dbReference>
<dbReference type="InterPro" id="IPR000754">
    <property type="entry name" value="Ribosomal_uS9"/>
</dbReference>
<dbReference type="InterPro" id="IPR023035">
    <property type="entry name" value="Ribosomal_uS9_bac/plastid"/>
</dbReference>
<dbReference type="InterPro" id="IPR020574">
    <property type="entry name" value="Ribosomal_uS9_CS"/>
</dbReference>
<dbReference type="InterPro" id="IPR014721">
    <property type="entry name" value="Ribsml_uS5_D2-typ_fold_subgr"/>
</dbReference>
<dbReference type="NCBIfam" id="NF001099">
    <property type="entry name" value="PRK00132.1"/>
    <property type="match status" value="1"/>
</dbReference>
<dbReference type="PANTHER" id="PTHR21569">
    <property type="entry name" value="RIBOSOMAL PROTEIN S9"/>
    <property type="match status" value="1"/>
</dbReference>
<dbReference type="PANTHER" id="PTHR21569:SF1">
    <property type="entry name" value="SMALL RIBOSOMAL SUBUNIT PROTEIN US9M"/>
    <property type="match status" value="1"/>
</dbReference>
<dbReference type="Pfam" id="PF00380">
    <property type="entry name" value="Ribosomal_S9"/>
    <property type="match status" value="1"/>
</dbReference>
<dbReference type="SUPFAM" id="SSF54211">
    <property type="entry name" value="Ribosomal protein S5 domain 2-like"/>
    <property type="match status" value="1"/>
</dbReference>
<dbReference type="PROSITE" id="PS00360">
    <property type="entry name" value="RIBOSOMAL_S9"/>
    <property type="match status" value="1"/>
</dbReference>
<comment type="similarity">
    <text evidence="1">Belongs to the universal ribosomal protein uS9 family.</text>
</comment>
<reference key="1">
    <citation type="journal article" date="2004" name="Nat. Genet.">
        <title>Reductive evolution suggested from the complete genome sequence of a plant-pathogenic phytoplasma.</title>
        <authorList>
            <person name="Oshima K."/>
            <person name="Kakizawa S."/>
            <person name="Nishigawa H."/>
            <person name="Jung H.-Y."/>
            <person name="Wei W."/>
            <person name="Suzuki S."/>
            <person name="Arashida R."/>
            <person name="Nakata D."/>
            <person name="Miyata S."/>
            <person name="Ugaki M."/>
            <person name="Namba S."/>
        </authorList>
    </citation>
    <scope>NUCLEOTIDE SEQUENCE [LARGE SCALE GENOMIC DNA]</scope>
    <source>
        <strain>OY-M</strain>
    </source>
</reference>
<accession>Q6YR77</accession>
<name>RS9_ONYPE</name>
<evidence type="ECO:0000255" key="1">
    <source>
        <dbReference type="HAMAP-Rule" id="MF_00532"/>
    </source>
</evidence>
<evidence type="ECO:0000305" key="2"/>
<feature type="chain" id="PRO_1000051276" description="Small ribosomal subunit protein uS9">
    <location>
        <begin position="1"/>
        <end position="130"/>
    </location>
</feature>
<proteinExistence type="inferred from homology"/>
<organism>
    <name type="scientific">Onion yellows phytoplasma (strain OY-M)</name>
    <dbReference type="NCBI Taxonomy" id="262768"/>
    <lineage>
        <taxon>Bacteria</taxon>
        <taxon>Bacillati</taxon>
        <taxon>Mycoplasmatota</taxon>
        <taxon>Mollicutes</taxon>
        <taxon>Acholeplasmatales</taxon>
        <taxon>Acholeplasmataceae</taxon>
        <taxon>Candidatus Phytoplasma</taxon>
        <taxon>16SrI (Aster yellows group)</taxon>
    </lineage>
</organism>
<protein>
    <recommendedName>
        <fullName evidence="1">Small ribosomal subunit protein uS9</fullName>
    </recommendedName>
    <alternativeName>
        <fullName evidence="2">30S ribosomal protein S9</fullName>
    </alternativeName>
</protein>